<dbReference type="EC" id="1.14.11.-" evidence="1"/>
<dbReference type="EMBL" id="CP000878">
    <property type="protein sequence ID" value="ABX09187.1"/>
    <property type="molecule type" value="Genomic_DNA"/>
</dbReference>
<dbReference type="RefSeq" id="WP_012195808.1">
    <property type="nucleotide sequence ID" value="NC_009976.1"/>
</dbReference>
<dbReference type="SMR" id="A9BBH5"/>
<dbReference type="STRING" id="93059.P9211_12561"/>
<dbReference type="KEGG" id="pmj:P9211_12561"/>
<dbReference type="eggNOG" id="COG3128">
    <property type="taxonomic scope" value="Bacteria"/>
</dbReference>
<dbReference type="HOGENOM" id="CLU_106663_0_0_3"/>
<dbReference type="OrthoDB" id="9812472at2"/>
<dbReference type="Proteomes" id="UP000000788">
    <property type="component" value="Chromosome"/>
</dbReference>
<dbReference type="GO" id="GO:0016706">
    <property type="term" value="F:2-oxoglutarate-dependent dioxygenase activity"/>
    <property type="evidence" value="ECO:0007669"/>
    <property type="project" value="UniProtKB-UniRule"/>
</dbReference>
<dbReference type="GO" id="GO:0005506">
    <property type="term" value="F:iron ion binding"/>
    <property type="evidence" value="ECO:0007669"/>
    <property type="project" value="UniProtKB-UniRule"/>
</dbReference>
<dbReference type="GO" id="GO:0031418">
    <property type="term" value="F:L-ascorbic acid binding"/>
    <property type="evidence" value="ECO:0007669"/>
    <property type="project" value="UniProtKB-KW"/>
</dbReference>
<dbReference type="GO" id="GO:0006974">
    <property type="term" value="P:DNA damage response"/>
    <property type="evidence" value="ECO:0007669"/>
    <property type="project" value="TreeGrafter"/>
</dbReference>
<dbReference type="GO" id="GO:0006879">
    <property type="term" value="P:intracellular iron ion homeostasis"/>
    <property type="evidence" value="ECO:0007669"/>
    <property type="project" value="TreeGrafter"/>
</dbReference>
<dbReference type="Gene3D" id="2.60.120.620">
    <property type="entry name" value="q2cbj1_9rhob like domain"/>
    <property type="match status" value="1"/>
</dbReference>
<dbReference type="Gene3D" id="4.10.860.20">
    <property type="entry name" value="Rabenosyn, Rab binding domain"/>
    <property type="match status" value="1"/>
</dbReference>
<dbReference type="HAMAP" id="MF_00657">
    <property type="entry name" value="Hydroxyl_YbiX"/>
    <property type="match status" value="1"/>
</dbReference>
<dbReference type="InterPro" id="IPR005123">
    <property type="entry name" value="Oxoglu/Fe-dep_dioxygenase_dom"/>
</dbReference>
<dbReference type="InterPro" id="IPR023550">
    <property type="entry name" value="PKHD_hydroxylase"/>
</dbReference>
<dbReference type="InterPro" id="IPR006620">
    <property type="entry name" value="Pro_4_hyd_alph"/>
</dbReference>
<dbReference type="InterPro" id="IPR044862">
    <property type="entry name" value="Pro_4_hyd_alph_FE2OG_OXY"/>
</dbReference>
<dbReference type="NCBIfam" id="NF003974">
    <property type="entry name" value="PRK05467.1-3"/>
    <property type="match status" value="1"/>
</dbReference>
<dbReference type="NCBIfam" id="NF003975">
    <property type="entry name" value="PRK05467.1-4"/>
    <property type="match status" value="1"/>
</dbReference>
<dbReference type="PANTHER" id="PTHR41536">
    <property type="entry name" value="PKHD-TYPE HYDROXYLASE YBIX"/>
    <property type="match status" value="1"/>
</dbReference>
<dbReference type="PANTHER" id="PTHR41536:SF1">
    <property type="entry name" value="PKHD-TYPE HYDROXYLASE YBIX"/>
    <property type="match status" value="1"/>
</dbReference>
<dbReference type="Pfam" id="PF13640">
    <property type="entry name" value="2OG-FeII_Oxy_3"/>
    <property type="match status" value="1"/>
</dbReference>
<dbReference type="SMART" id="SM00702">
    <property type="entry name" value="P4Hc"/>
    <property type="match status" value="1"/>
</dbReference>
<dbReference type="PROSITE" id="PS51471">
    <property type="entry name" value="FE2OG_OXY"/>
    <property type="match status" value="1"/>
</dbReference>
<protein>
    <recommendedName>
        <fullName evidence="1">PKHD-type hydroxylase P9211_12561</fullName>
        <ecNumber evidence="1">1.14.11.-</ecNumber>
    </recommendedName>
</protein>
<feature type="chain" id="PRO_0000346500" description="PKHD-type hydroxylase P9211_12561">
    <location>
        <begin position="1"/>
        <end position="221"/>
    </location>
</feature>
<feature type="domain" description="Fe2OG dioxygenase" evidence="1">
    <location>
        <begin position="80"/>
        <end position="174"/>
    </location>
</feature>
<feature type="binding site" evidence="1">
    <location>
        <position position="98"/>
    </location>
    <ligand>
        <name>Fe cation</name>
        <dbReference type="ChEBI" id="CHEBI:24875"/>
    </ligand>
</feature>
<feature type="binding site" evidence="1">
    <location>
        <position position="100"/>
    </location>
    <ligand>
        <name>Fe cation</name>
        <dbReference type="ChEBI" id="CHEBI:24875"/>
    </ligand>
</feature>
<feature type="binding site" evidence="1">
    <location>
        <position position="155"/>
    </location>
    <ligand>
        <name>Fe cation</name>
        <dbReference type="ChEBI" id="CHEBI:24875"/>
    </ligand>
</feature>
<feature type="binding site" evidence="1">
    <location>
        <position position="165"/>
    </location>
    <ligand>
        <name>2-oxoglutarate</name>
        <dbReference type="ChEBI" id="CHEBI:16810"/>
    </ligand>
</feature>
<sequence>MELLIHQLLSKEESKKITSNITKDNSCWIDGKTSAGSYAAKVKNNLQLKKDSEVGVTNSNKVNNKLTSDQLIKSFALPRKVHGTMFTRSSVGQGYGMHVDNAYMSSGRSDLSFTIFLSSPNEYQGGELLIQSMQGVKEIKLNCGQIVIYPSTSLHSVKQVSQGERIVCVGWIQSYVANNEDRNFLFGLDAGARGLLAKHGRSDELDLVFQAYSNLLRRLGD</sequence>
<name>Y1256_PROM4</name>
<keyword id="KW-0223">Dioxygenase</keyword>
<keyword id="KW-0408">Iron</keyword>
<keyword id="KW-0479">Metal-binding</keyword>
<keyword id="KW-0560">Oxidoreductase</keyword>
<keyword id="KW-1185">Reference proteome</keyword>
<keyword id="KW-0847">Vitamin C</keyword>
<gene>
    <name type="ordered locus">P9211_12561</name>
</gene>
<accession>A9BBH5</accession>
<organism>
    <name type="scientific">Prochlorococcus marinus (strain MIT 9211)</name>
    <dbReference type="NCBI Taxonomy" id="93059"/>
    <lineage>
        <taxon>Bacteria</taxon>
        <taxon>Bacillati</taxon>
        <taxon>Cyanobacteriota</taxon>
        <taxon>Cyanophyceae</taxon>
        <taxon>Synechococcales</taxon>
        <taxon>Prochlorococcaceae</taxon>
        <taxon>Prochlorococcus</taxon>
    </lineage>
</organism>
<proteinExistence type="inferred from homology"/>
<comment type="cofactor">
    <cofactor evidence="1">
        <name>Fe(2+)</name>
        <dbReference type="ChEBI" id="CHEBI:29033"/>
    </cofactor>
    <text evidence="1">Binds 1 Fe(2+) ion per subunit.</text>
</comment>
<comment type="cofactor">
    <cofactor evidence="1">
        <name>L-ascorbate</name>
        <dbReference type="ChEBI" id="CHEBI:38290"/>
    </cofactor>
</comment>
<evidence type="ECO:0000255" key="1">
    <source>
        <dbReference type="HAMAP-Rule" id="MF_00657"/>
    </source>
</evidence>
<reference key="1">
    <citation type="journal article" date="2007" name="PLoS Genet.">
        <title>Patterns and implications of gene gain and loss in the evolution of Prochlorococcus.</title>
        <authorList>
            <person name="Kettler G.C."/>
            <person name="Martiny A.C."/>
            <person name="Huang K."/>
            <person name="Zucker J."/>
            <person name="Coleman M.L."/>
            <person name="Rodrigue S."/>
            <person name="Chen F."/>
            <person name="Lapidus A."/>
            <person name="Ferriera S."/>
            <person name="Johnson J."/>
            <person name="Steglich C."/>
            <person name="Church G.M."/>
            <person name="Richardson P."/>
            <person name="Chisholm S.W."/>
        </authorList>
    </citation>
    <scope>NUCLEOTIDE SEQUENCE [LARGE SCALE GENOMIC DNA]</scope>
    <source>
        <strain>MIT 9211</strain>
    </source>
</reference>